<evidence type="ECO:0000250" key="1">
    <source>
        <dbReference type="UniProtKB" id="P07507"/>
    </source>
</evidence>
<evidence type="ECO:0000255" key="2">
    <source>
        <dbReference type="PROSITE-ProRule" id="PRU00463"/>
    </source>
</evidence>
<evidence type="ECO:0000269" key="3">
    <source>
    </source>
</evidence>
<evidence type="ECO:0000305" key="4"/>
<reference key="1">
    <citation type="journal article" date="1987" name="Proc. Natl. Acad. Sci. U.S.A.">
        <title>Molecular cloning of matrix Gla protein: implications for substrate recognition by the vitamin K-dependent gamma-carboxylase.</title>
        <authorList>
            <person name="Price P.A."/>
            <person name="Fraser J.D."/>
            <person name="Metz-Virca G."/>
        </authorList>
    </citation>
    <scope>NUCLEOTIDE SEQUENCE [MRNA]</scope>
</reference>
<reference key="2">
    <citation type="journal article" date="1994" name="Protein Sci.">
        <title>Conserved phosphorylation of serines in the Ser-X-Glu/Ser(P) sequences of the vitamin K-dependent matrix Gla protein from shark, lamb, rat, cow, and human.</title>
        <authorList>
            <person name="Price P.A."/>
            <person name="Rice J.S."/>
            <person name="Williamson M.K."/>
        </authorList>
    </citation>
    <scope>PHOSPHORYLATION AT SER-22; SER-25 AND SER-28</scope>
</reference>
<name>MGP_RAT</name>
<gene>
    <name type="primary">Mgp</name>
</gene>
<proteinExistence type="evidence at protein level"/>
<accession>P08494</accession>
<keyword id="KW-0891">Chondrogenesis</keyword>
<keyword id="KW-0217">Developmental protein</keyword>
<keyword id="KW-0221">Differentiation</keyword>
<keyword id="KW-1015">Disulfide bond</keyword>
<keyword id="KW-0301">Gamma-carboxyglutamic acid</keyword>
<keyword id="KW-0892">Osteogenesis</keyword>
<keyword id="KW-0597">Phosphoprotein</keyword>
<keyword id="KW-1185">Reference proteome</keyword>
<keyword id="KW-0964">Secreted</keyword>
<keyword id="KW-0732">Signal</keyword>
<sequence length="103" mass="12037">MKSLLPLAILAALAVAALCYESHESMESYEVSPFTTRRNANTFISPQQRWHAKAQERVRELNKPAQEINREACDDYKLCERYALIYGYNAAYNRYFRQRRGAK</sequence>
<organism>
    <name type="scientific">Rattus norvegicus</name>
    <name type="common">Rat</name>
    <dbReference type="NCBI Taxonomy" id="10116"/>
    <lineage>
        <taxon>Eukaryota</taxon>
        <taxon>Metazoa</taxon>
        <taxon>Chordata</taxon>
        <taxon>Craniata</taxon>
        <taxon>Vertebrata</taxon>
        <taxon>Euteleostomi</taxon>
        <taxon>Mammalia</taxon>
        <taxon>Eutheria</taxon>
        <taxon>Euarchontoglires</taxon>
        <taxon>Glires</taxon>
        <taxon>Rodentia</taxon>
        <taxon>Myomorpha</taxon>
        <taxon>Muroidea</taxon>
        <taxon>Muridae</taxon>
        <taxon>Murinae</taxon>
        <taxon>Rattus</taxon>
    </lineage>
</organism>
<dbReference type="EMBL" id="J03026">
    <property type="protein sequence ID" value="AAA41597.1"/>
    <property type="molecule type" value="mRNA"/>
</dbReference>
<dbReference type="PIR" id="A39974">
    <property type="entry name" value="GERTM1"/>
</dbReference>
<dbReference type="RefSeq" id="NP_036994.1">
    <property type="nucleotide sequence ID" value="NM_012862.1"/>
</dbReference>
<dbReference type="SMR" id="P08494"/>
<dbReference type="BioGRID" id="247372">
    <property type="interactions" value="1"/>
</dbReference>
<dbReference type="FunCoup" id="P08494">
    <property type="interactions" value="157"/>
</dbReference>
<dbReference type="STRING" id="10116.ENSRNOP00000007577"/>
<dbReference type="iPTMnet" id="P08494"/>
<dbReference type="PhosphoSitePlus" id="P08494"/>
<dbReference type="PaxDb" id="10116-ENSRNOP00000007577"/>
<dbReference type="GeneID" id="25333"/>
<dbReference type="KEGG" id="rno:25333"/>
<dbReference type="UCSC" id="RGD:3088">
    <property type="organism name" value="rat"/>
</dbReference>
<dbReference type="AGR" id="RGD:3088"/>
<dbReference type="CTD" id="4256"/>
<dbReference type="RGD" id="3088">
    <property type="gene designation" value="Mgp"/>
</dbReference>
<dbReference type="eggNOG" id="ENOG502S45A">
    <property type="taxonomic scope" value="Eukaryota"/>
</dbReference>
<dbReference type="InParanoid" id="P08494"/>
<dbReference type="PhylomeDB" id="P08494"/>
<dbReference type="PRO" id="PR:P08494"/>
<dbReference type="Proteomes" id="UP000002494">
    <property type="component" value="Unplaced"/>
</dbReference>
<dbReference type="GO" id="GO:0031012">
    <property type="term" value="C:extracellular matrix"/>
    <property type="evidence" value="ECO:0000318"/>
    <property type="project" value="GO_Central"/>
</dbReference>
<dbReference type="GO" id="GO:0005615">
    <property type="term" value="C:extracellular space"/>
    <property type="evidence" value="ECO:0000314"/>
    <property type="project" value="RGD"/>
</dbReference>
<dbReference type="GO" id="GO:0032991">
    <property type="term" value="C:protein-containing complex"/>
    <property type="evidence" value="ECO:0000314"/>
    <property type="project" value="RGD"/>
</dbReference>
<dbReference type="GO" id="GO:0005509">
    <property type="term" value="F:calcium ion binding"/>
    <property type="evidence" value="ECO:0000314"/>
    <property type="project" value="RGD"/>
</dbReference>
<dbReference type="GO" id="GO:0048306">
    <property type="term" value="F:calcium-dependent protein binding"/>
    <property type="evidence" value="ECO:0000353"/>
    <property type="project" value="RGD"/>
</dbReference>
<dbReference type="GO" id="GO:0048754">
    <property type="term" value="P:branching morphogenesis of an epithelial tube"/>
    <property type="evidence" value="ECO:0000315"/>
    <property type="project" value="RGD"/>
</dbReference>
<dbReference type="GO" id="GO:0051216">
    <property type="term" value="P:cartilage development"/>
    <property type="evidence" value="ECO:0007669"/>
    <property type="project" value="UniProtKB-KW"/>
</dbReference>
<dbReference type="GO" id="GO:0030154">
    <property type="term" value="P:cell differentiation"/>
    <property type="evidence" value="ECO:0007669"/>
    <property type="project" value="UniProtKB-KW"/>
</dbReference>
<dbReference type="GO" id="GO:0030324">
    <property type="term" value="P:lung development"/>
    <property type="evidence" value="ECO:0000315"/>
    <property type="project" value="RGD"/>
</dbReference>
<dbReference type="GO" id="GO:0001503">
    <property type="term" value="P:ossification"/>
    <property type="evidence" value="ECO:0000270"/>
    <property type="project" value="RGD"/>
</dbReference>
<dbReference type="GO" id="GO:0065003">
    <property type="term" value="P:protein-containing complex assembly"/>
    <property type="evidence" value="ECO:0000353"/>
    <property type="project" value="RGD"/>
</dbReference>
<dbReference type="GO" id="GO:0030500">
    <property type="term" value="P:regulation of bone mineralization"/>
    <property type="evidence" value="ECO:0007669"/>
    <property type="project" value="InterPro"/>
</dbReference>
<dbReference type="GO" id="GO:0051592">
    <property type="term" value="P:response to calcium ion"/>
    <property type="evidence" value="ECO:0000270"/>
    <property type="project" value="RGD"/>
</dbReference>
<dbReference type="GO" id="GO:0051384">
    <property type="term" value="P:response to glucocorticoid"/>
    <property type="evidence" value="ECO:0000270"/>
    <property type="project" value="RGD"/>
</dbReference>
<dbReference type="GO" id="GO:0009725">
    <property type="term" value="P:response to hormone"/>
    <property type="evidence" value="ECO:0000270"/>
    <property type="project" value="RGD"/>
</dbReference>
<dbReference type="GO" id="GO:0009612">
    <property type="term" value="P:response to mechanical stimulus"/>
    <property type="evidence" value="ECO:0000270"/>
    <property type="project" value="RGD"/>
</dbReference>
<dbReference type="GO" id="GO:0007584">
    <property type="term" value="P:response to nutrient"/>
    <property type="evidence" value="ECO:0000270"/>
    <property type="project" value="RGD"/>
</dbReference>
<dbReference type="InterPro" id="IPR035972">
    <property type="entry name" value="GLA-like_dom_SF"/>
</dbReference>
<dbReference type="InterPro" id="IPR000294">
    <property type="entry name" value="GLA_domain"/>
</dbReference>
<dbReference type="InterPro" id="IPR027118">
    <property type="entry name" value="MGP"/>
</dbReference>
<dbReference type="InterPro" id="IPR002384">
    <property type="entry name" value="Osteocalcin/MGP"/>
</dbReference>
<dbReference type="PANTHER" id="PTHR10109">
    <property type="entry name" value="MATRIX GLA PROTEIN"/>
    <property type="match status" value="1"/>
</dbReference>
<dbReference type="PANTHER" id="PTHR10109:SF0">
    <property type="entry name" value="MATRIX GLA PROTEIN"/>
    <property type="match status" value="1"/>
</dbReference>
<dbReference type="PRINTS" id="PR00002">
    <property type="entry name" value="GLABONE"/>
</dbReference>
<dbReference type="SMART" id="SM00069">
    <property type="entry name" value="GLA"/>
    <property type="match status" value="1"/>
</dbReference>
<dbReference type="SUPFAM" id="SSF57630">
    <property type="entry name" value="GLA-domain"/>
    <property type="match status" value="1"/>
</dbReference>
<dbReference type="PROSITE" id="PS00011">
    <property type="entry name" value="GLA_1"/>
    <property type="match status" value="1"/>
</dbReference>
<dbReference type="PROSITE" id="PS50998">
    <property type="entry name" value="GLA_2"/>
    <property type="match status" value="1"/>
</dbReference>
<feature type="signal peptide">
    <location>
        <begin position="1"/>
        <end position="19"/>
    </location>
</feature>
<feature type="chain" id="PRO_0000011116" description="Matrix Gla protein">
    <location>
        <begin position="20"/>
        <end position="103"/>
    </location>
</feature>
<feature type="domain" description="Gla" evidence="2">
    <location>
        <begin position="51"/>
        <end position="97"/>
    </location>
</feature>
<feature type="modified residue" description="4-carboxyglutamate" evidence="1 2">
    <location>
        <position position="21"/>
    </location>
</feature>
<feature type="modified residue" description="Phosphoserine" evidence="3">
    <location>
        <position position="22"/>
    </location>
</feature>
<feature type="modified residue" description="Phosphoserine" evidence="3">
    <location>
        <position position="25"/>
    </location>
</feature>
<feature type="modified residue" description="Phosphoserine" evidence="3">
    <location>
        <position position="28"/>
    </location>
</feature>
<feature type="modified residue" description="4-carboxyglutamate" evidence="1 2">
    <location>
        <position position="56"/>
    </location>
</feature>
<feature type="modified residue" description="4-carboxyglutamate" evidence="1 2">
    <location>
        <position position="60"/>
    </location>
</feature>
<feature type="modified residue" description="4-carboxyglutamate" evidence="1 2">
    <location>
        <position position="67"/>
    </location>
</feature>
<feature type="modified residue" description="4-carboxyglutamate" evidence="1 2">
    <location>
        <position position="71"/>
    </location>
</feature>
<feature type="disulfide bond" evidence="2">
    <location>
        <begin position="73"/>
        <end position="79"/>
    </location>
</feature>
<protein>
    <recommendedName>
        <fullName>Matrix Gla protein</fullName>
        <shortName>MGP</shortName>
    </recommendedName>
</protein>
<comment type="function">
    <text>Associates with the organic matrix of bone and cartilage. Thought to act as an inhibitor of bone formation.</text>
</comment>
<comment type="subcellular location">
    <subcellularLocation>
        <location>Secreted</location>
    </subcellularLocation>
</comment>
<comment type="PTM">
    <text>Requires vitamin K-dependent gamma-carboxylation for its function.</text>
</comment>
<comment type="similarity">
    <text evidence="4">Belongs to the osteocalcin/matrix Gla protein family.</text>
</comment>